<accession>Q9PLH5</accession>
<keyword id="KW-0030">Aminoacyl-tRNA synthetase</keyword>
<keyword id="KW-0067">ATP-binding</keyword>
<keyword id="KW-0963">Cytoplasm</keyword>
<keyword id="KW-0436">Ligase</keyword>
<keyword id="KW-0479">Metal-binding</keyword>
<keyword id="KW-0547">Nucleotide-binding</keyword>
<keyword id="KW-0648">Protein biosynthesis</keyword>
<keyword id="KW-0694">RNA-binding</keyword>
<keyword id="KW-0820">tRNA-binding</keyword>
<keyword id="KW-0862">Zinc</keyword>
<name>SYA_CHLMU</name>
<protein>
    <recommendedName>
        <fullName evidence="1">Alanine--tRNA ligase</fullName>
        <ecNumber evidence="1">6.1.1.7</ecNumber>
    </recommendedName>
    <alternativeName>
        <fullName evidence="1">Alanyl-tRNA synthetase</fullName>
        <shortName evidence="1">AlaRS</shortName>
    </alternativeName>
</protein>
<feature type="chain" id="PRO_0000075086" description="Alanine--tRNA ligase">
    <location>
        <begin position="1"/>
        <end position="875"/>
    </location>
</feature>
<feature type="region of interest" description="Disordered" evidence="2">
    <location>
        <begin position="426"/>
        <end position="445"/>
    </location>
</feature>
<feature type="binding site" evidence="1">
    <location>
        <position position="561"/>
    </location>
    <ligand>
        <name>Zn(2+)</name>
        <dbReference type="ChEBI" id="CHEBI:29105"/>
    </ligand>
</feature>
<feature type="binding site" evidence="1">
    <location>
        <position position="565"/>
    </location>
    <ligand>
        <name>Zn(2+)</name>
        <dbReference type="ChEBI" id="CHEBI:29105"/>
    </ligand>
</feature>
<feature type="binding site" evidence="1">
    <location>
        <position position="663"/>
    </location>
    <ligand>
        <name>Zn(2+)</name>
        <dbReference type="ChEBI" id="CHEBI:29105"/>
    </ligand>
</feature>
<feature type="binding site" evidence="1">
    <location>
        <position position="667"/>
    </location>
    <ligand>
        <name>Zn(2+)</name>
        <dbReference type="ChEBI" id="CHEBI:29105"/>
    </ligand>
</feature>
<proteinExistence type="inferred from homology"/>
<comment type="function">
    <text evidence="1">Catalyzes the attachment of alanine to tRNA(Ala) in a two-step reaction: alanine is first activated by ATP to form Ala-AMP and then transferred to the acceptor end of tRNA(Ala). Also edits incorrectly charged Ser-tRNA(Ala) and Gly-tRNA(Ala) via its editing domain.</text>
</comment>
<comment type="catalytic activity">
    <reaction evidence="1">
        <text>tRNA(Ala) + L-alanine + ATP = L-alanyl-tRNA(Ala) + AMP + diphosphate</text>
        <dbReference type="Rhea" id="RHEA:12540"/>
        <dbReference type="Rhea" id="RHEA-COMP:9657"/>
        <dbReference type="Rhea" id="RHEA-COMP:9923"/>
        <dbReference type="ChEBI" id="CHEBI:30616"/>
        <dbReference type="ChEBI" id="CHEBI:33019"/>
        <dbReference type="ChEBI" id="CHEBI:57972"/>
        <dbReference type="ChEBI" id="CHEBI:78442"/>
        <dbReference type="ChEBI" id="CHEBI:78497"/>
        <dbReference type="ChEBI" id="CHEBI:456215"/>
        <dbReference type="EC" id="6.1.1.7"/>
    </reaction>
</comment>
<comment type="cofactor">
    <cofactor evidence="1">
        <name>Zn(2+)</name>
        <dbReference type="ChEBI" id="CHEBI:29105"/>
    </cofactor>
    <text evidence="1">Binds 1 zinc ion per subunit.</text>
</comment>
<comment type="subcellular location">
    <subcellularLocation>
        <location evidence="1">Cytoplasm</location>
    </subcellularLocation>
</comment>
<comment type="domain">
    <text evidence="1">Consists of three domains; the N-terminal catalytic domain, the editing domain and the C-terminal C-Ala domain. The editing domain removes incorrectly charged amino acids, while the C-Ala domain, along with tRNA(Ala), serves as a bridge to cooperatively bring together the editing and aminoacylation centers thus stimulating deacylation of misacylated tRNAs.</text>
</comment>
<comment type="similarity">
    <text evidence="1">Belongs to the class-II aminoacyl-tRNA synthetase family.</text>
</comment>
<dbReference type="EC" id="6.1.1.7" evidence="1"/>
<dbReference type="EMBL" id="AE002160">
    <property type="protein sequence ID" value="AAF39003.1"/>
    <property type="molecule type" value="Genomic_DNA"/>
</dbReference>
<dbReference type="PIR" id="H81739">
    <property type="entry name" value="H81739"/>
</dbReference>
<dbReference type="RefSeq" id="WP_010229452.1">
    <property type="nucleotide sequence ID" value="NZ_CP063055.1"/>
</dbReference>
<dbReference type="SMR" id="Q9PLH5"/>
<dbReference type="GeneID" id="1245659"/>
<dbReference type="KEGG" id="cmu:TC_0125"/>
<dbReference type="eggNOG" id="COG0013">
    <property type="taxonomic scope" value="Bacteria"/>
</dbReference>
<dbReference type="HOGENOM" id="CLU_004485_1_1_0"/>
<dbReference type="OrthoDB" id="9803884at2"/>
<dbReference type="Proteomes" id="UP000000800">
    <property type="component" value="Chromosome"/>
</dbReference>
<dbReference type="GO" id="GO:0005829">
    <property type="term" value="C:cytosol"/>
    <property type="evidence" value="ECO:0007669"/>
    <property type="project" value="TreeGrafter"/>
</dbReference>
<dbReference type="GO" id="GO:0004813">
    <property type="term" value="F:alanine-tRNA ligase activity"/>
    <property type="evidence" value="ECO:0007669"/>
    <property type="project" value="UniProtKB-UniRule"/>
</dbReference>
<dbReference type="GO" id="GO:0002161">
    <property type="term" value="F:aminoacyl-tRNA deacylase activity"/>
    <property type="evidence" value="ECO:0007669"/>
    <property type="project" value="TreeGrafter"/>
</dbReference>
<dbReference type="GO" id="GO:0005524">
    <property type="term" value="F:ATP binding"/>
    <property type="evidence" value="ECO:0007669"/>
    <property type="project" value="UniProtKB-UniRule"/>
</dbReference>
<dbReference type="GO" id="GO:0000049">
    <property type="term" value="F:tRNA binding"/>
    <property type="evidence" value="ECO:0007669"/>
    <property type="project" value="UniProtKB-KW"/>
</dbReference>
<dbReference type="GO" id="GO:0008270">
    <property type="term" value="F:zinc ion binding"/>
    <property type="evidence" value="ECO:0007669"/>
    <property type="project" value="UniProtKB-UniRule"/>
</dbReference>
<dbReference type="GO" id="GO:0006419">
    <property type="term" value="P:alanyl-tRNA aminoacylation"/>
    <property type="evidence" value="ECO:0007669"/>
    <property type="project" value="UniProtKB-UniRule"/>
</dbReference>
<dbReference type="CDD" id="cd00673">
    <property type="entry name" value="AlaRS_core"/>
    <property type="match status" value="1"/>
</dbReference>
<dbReference type="FunFam" id="2.40.30.130:FF:000001">
    <property type="entry name" value="Alanine--tRNA ligase"/>
    <property type="match status" value="1"/>
</dbReference>
<dbReference type="FunFam" id="3.30.930.10:FF:000004">
    <property type="entry name" value="Alanine--tRNA ligase"/>
    <property type="match status" value="1"/>
</dbReference>
<dbReference type="FunFam" id="3.30.980.10:FF:000004">
    <property type="entry name" value="Alanine--tRNA ligase, cytoplasmic"/>
    <property type="match status" value="1"/>
</dbReference>
<dbReference type="Gene3D" id="2.40.30.130">
    <property type="match status" value="1"/>
</dbReference>
<dbReference type="Gene3D" id="3.10.310.40">
    <property type="match status" value="1"/>
</dbReference>
<dbReference type="Gene3D" id="3.30.54.20">
    <property type="match status" value="1"/>
</dbReference>
<dbReference type="Gene3D" id="6.10.250.550">
    <property type="match status" value="1"/>
</dbReference>
<dbReference type="Gene3D" id="3.30.930.10">
    <property type="entry name" value="Bira Bifunctional Protein, Domain 2"/>
    <property type="match status" value="1"/>
</dbReference>
<dbReference type="Gene3D" id="3.30.980.10">
    <property type="entry name" value="Threonyl-trna Synthetase, Chain A, domain 2"/>
    <property type="match status" value="1"/>
</dbReference>
<dbReference type="HAMAP" id="MF_00036_B">
    <property type="entry name" value="Ala_tRNA_synth_B"/>
    <property type="match status" value="1"/>
</dbReference>
<dbReference type="InterPro" id="IPR045864">
    <property type="entry name" value="aa-tRNA-synth_II/BPL/LPL"/>
</dbReference>
<dbReference type="InterPro" id="IPR002318">
    <property type="entry name" value="Ala-tRNA-lgiase_IIc"/>
</dbReference>
<dbReference type="InterPro" id="IPR018162">
    <property type="entry name" value="Ala-tRNA-ligase_IIc_anticod-bd"/>
</dbReference>
<dbReference type="InterPro" id="IPR018165">
    <property type="entry name" value="Ala-tRNA-synth_IIc_core"/>
</dbReference>
<dbReference type="InterPro" id="IPR018164">
    <property type="entry name" value="Ala-tRNA-synth_IIc_N"/>
</dbReference>
<dbReference type="InterPro" id="IPR050058">
    <property type="entry name" value="Ala-tRNA_ligase"/>
</dbReference>
<dbReference type="InterPro" id="IPR023033">
    <property type="entry name" value="Ala_tRNA_ligase_euk/bac"/>
</dbReference>
<dbReference type="InterPro" id="IPR003156">
    <property type="entry name" value="DHHA1_dom"/>
</dbReference>
<dbReference type="InterPro" id="IPR018163">
    <property type="entry name" value="Thr/Ala-tRNA-synth_IIc_edit"/>
</dbReference>
<dbReference type="InterPro" id="IPR009000">
    <property type="entry name" value="Transl_B-barrel_sf"/>
</dbReference>
<dbReference type="InterPro" id="IPR012947">
    <property type="entry name" value="tRNA_SAD"/>
</dbReference>
<dbReference type="NCBIfam" id="TIGR00344">
    <property type="entry name" value="alaS"/>
    <property type="match status" value="1"/>
</dbReference>
<dbReference type="PANTHER" id="PTHR11777:SF9">
    <property type="entry name" value="ALANINE--TRNA LIGASE, CYTOPLASMIC"/>
    <property type="match status" value="1"/>
</dbReference>
<dbReference type="PANTHER" id="PTHR11777">
    <property type="entry name" value="ALANYL-TRNA SYNTHETASE"/>
    <property type="match status" value="1"/>
</dbReference>
<dbReference type="Pfam" id="PF02272">
    <property type="entry name" value="DHHA1"/>
    <property type="match status" value="1"/>
</dbReference>
<dbReference type="Pfam" id="PF01411">
    <property type="entry name" value="tRNA-synt_2c"/>
    <property type="match status" value="1"/>
</dbReference>
<dbReference type="Pfam" id="PF07973">
    <property type="entry name" value="tRNA_SAD"/>
    <property type="match status" value="1"/>
</dbReference>
<dbReference type="PRINTS" id="PR00980">
    <property type="entry name" value="TRNASYNTHALA"/>
</dbReference>
<dbReference type="SMART" id="SM00863">
    <property type="entry name" value="tRNA_SAD"/>
    <property type="match status" value="1"/>
</dbReference>
<dbReference type="SUPFAM" id="SSF55681">
    <property type="entry name" value="Class II aaRS and biotin synthetases"/>
    <property type="match status" value="1"/>
</dbReference>
<dbReference type="SUPFAM" id="SSF101353">
    <property type="entry name" value="Putative anticodon-binding domain of alanyl-tRNA synthetase (AlaRS)"/>
    <property type="match status" value="1"/>
</dbReference>
<dbReference type="SUPFAM" id="SSF55186">
    <property type="entry name" value="ThrRS/AlaRS common domain"/>
    <property type="match status" value="1"/>
</dbReference>
<dbReference type="SUPFAM" id="SSF50447">
    <property type="entry name" value="Translation proteins"/>
    <property type="match status" value="1"/>
</dbReference>
<dbReference type="PROSITE" id="PS50860">
    <property type="entry name" value="AA_TRNA_LIGASE_II_ALA"/>
    <property type="match status" value="1"/>
</dbReference>
<gene>
    <name evidence="1" type="primary">alaS</name>
    <name type="ordered locus">TC_0125</name>
</gene>
<reference key="1">
    <citation type="journal article" date="2000" name="Nucleic Acids Res.">
        <title>Genome sequences of Chlamydia trachomatis MoPn and Chlamydia pneumoniae AR39.</title>
        <authorList>
            <person name="Read T.D."/>
            <person name="Brunham R.C."/>
            <person name="Shen C."/>
            <person name="Gill S.R."/>
            <person name="Heidelberg J.F."/>
            <person name="White O."/>
            <person name="Hickey E.K."/>
            <person name="Peterson J.D."/>
            <person name="Utterback T.R."/>
            <person name="Berry K.J."/>
            <person name="Bass S."/>
            <person name="Linher K.D."/>
            <person name="Weidman J.F."/>
            <person name="Khouri H.M."/>
            <person name="Craven B."/>
            <person name="Bowman C."/>
            <person name="Dodson R.J."/>
            <person name="Gwinn M.L."/>
            <person name="Nelson W.C."/>
            <person name="DeBoy R.T."/>
            <person name="Kolonay J.F."/>
            <person name="McClarty G."/>
            <person name="Salzberg S.L."/>
            <person name="Eisen J.A."/>
            <person name="Fraser C.M."/>
        </authorList>
    </citation>
    <scope>NUCLEOTIDE SEQUENCE [LARGE SCALE GENOMIC DNA]</scope>
    <source>
        <strain>MoPn / Nigg</strain>
    </source>
</reference>
<evidence type="ECO:0000255" key="1">
    <source>
        <dbReference type="HAMAP-Rule" id="MF_00036"/>
    </source>
</evidence>
<evidence type="ECO:0000256" key="2">
    <source>
        <dbReference type="SAM" id="MobiDB-lite"/>
    </source>
</evidence>
<organism>
    <name type="scientific">Chlamydia muridarum (strain MoPn / Nigg)</name>
    <dbReference type="NCBI Taxonomy" id="243161"/>
    <lineage>
        <taxon>Bacteria</taxon>
        <taxon>Pseudomonadati</taxon>
        <taxon>Chlamydiota</taxon>
        <taxon>Chlamydiia</taxon>
        <taxon>Chlamydiales</taxon>
        <taxon>Chlamydiaceae</taxon>
        <taxon>Chlamydia/Chlamydophila group</taxon>
        <taxon>Chlamydia</taxon>
    </lineage>
</organism>
<sequence>MLSNTLRSNFLKFYTNRNHTPVASSPVFPYNDPSILFTNAGMNQFKNIFLGKEQTSYTRATTSQKCIRAGGKHNDLENVGHTSRHLTFFEMLGNFSFGDYFKQDAISFAWEVSLSVFNFDPDFIYATVHEKDDEAFALWEKYLPTNRIFRLTDKDNFWSMADTGPCGFCSELLFDRGEKFGKATSPLEDADGERFLEYWNLVFMEFNRTSDGTLLALQKKCVDTGAGLERLVSLLSETDTVFEADVLRHLIAKVENLSEITYSPTESKGSAFRVIADHVRSLSFAITDGLLPGNTERGYVLRKILRRAVNYGKRLGFHRPFLAEIVPSLIETMGEAYPELQAAETQIQEVLTTEEEHFFKTLQRGGNLLHQVLKSSASLSKISGEDAFKLKDTYGLPIDEIALLAKDHNYTVDMDTFRKLEMEAKERSRKNTVKNKNDSDSIFQDVDPTNTSEFVGYDMLSCDTFIEGIVKYNEIASTLEEGEEGAIILRTTPFYAEKGGQVGDSGEIFCESGTFLVSHTTTPKAGLIAHHGKLSQGSLQTTMAVTAQVNQNLRKKIANNHTGCHLLHKALEVSLGEHIRQAGSYVDSQKIRLDFSHNKALSPEELLTIETLVNEKIRENVPVTIREALYSDVMNSSEIKQFFGDKYGDIVRVVSAGFSHELCGGTHARATGDIGYFRITKEHAVSTGIRRIEATTGEDAENIARGQDTDLNEIATIIQSPKDQLLVKLRNVMEEKKDLAKQLANLENQLVQQQVKSLLTSCDKVNETSYLVYHLTEEEGQRIQHYANTLHKEVPAKFISLWVTEKNDRYIVLVRVSDDLVKQGIDAQALLEELLAPYGGRCGGKAVSAQGSSKELPQIEVLNTILRQWISTRLA</sequence>